<name>SWEET_ECOU3</name>
<evidence type="ECO:0000255" key="1"/>
<evidence type="ECO:0000269" key="2">
    <source>
    </source>
</evidence>
<evidence type="ECO:0000303" key="3">
    <source>
    </source>
</evidence>
<evidence type="ECO:0000305" key="4"/>
<evidence type="ECO:0000312" key="5">
    <source>
        <dbReference type="EMBL" id="EQX17757.1"/>
    </source>
</evidence>
<evidence type="ECO:0007829" key="6">
    <source>
        <dbReference type="PDB" id="4X5M"/>
    </source>
</evidence>
<proteinExistence type="evidence at protein level"/>
<sequence length="89" mass="9956">MDTILLTGLFAAFFTTFAFAPQSIKTIRTRNTEGISVVMYIMFLTGVISWIAYGIMRSDFAVLIANIVTLFLAAPVLVITLINRRKKHV</sequence>
<keyword id="KW-0002">3D-structure</keyword>
<keyword id="KW-1003">Cell membrane</keyword>
<keyword id="KW-0472">Membrane</keyword>
<keyword id="KW-0762">Sugar transport</keyword>
<keyword id="KW-0812">Transmembrane</keyword>
<keyword id="KW-1133">Transmembrane helix</keyword>
<keyword id="KW-0813">Transport</keyword>
<organism>
    <name type="scientific">Escherichia coli (strain UMEA 3162-1)</name>
    <dbReference type="NCBI Taxonomy" id="1281200"/>
    <lineage>
        <taxon>Bacteria</taxon>
        <taxon>Pseudomonadati</taxon>
        <taxon>Pseudomonadota</taxon>
        <taxon>Gammaproteobacteria</taxon>
        <taxon>Enterobacterales</taxon>
        <taxon>Enterobacteriaceae</taxon>
        <taxon>Escherichia</taxon>
    </lineage>
</organism>
<comment type="function">
    <text evidence="2">The homodimer mediates transmembrane sugar transport down a concentration gradient. Transport is probably effected by rocking-type movements, where a cargo-binding cavity opens first on one and then on the other side of the membrane.</text>
</comment>
<comment type="subunit">
    <text evidence="2">Homodimer.</text>
</comment>
<comment type="subcellular location">
    <subcellularLocation>
        <location evidence="4">Cell membrane</location>
        <topology evidence="2">Multi-pass membrane protein</topology>
    </subcellularLocation>
</comment>
<feature type="chain" id="PRO_0000432579" description="Sugar transporter SemiSWEET">
    <location>
        <begin position="1"/>
        <end position="89"/>
    </location>
</feature>
<feature type="transmembrane region" description="Helical; Name=1" evidence="2">
    <location>
        <begin position="4"/>
        <end position="27"/>
    </location>
</feature>
<feature type="transmembrane region" description="Helical; Name=2" evidence="2">
    <location>
        <begin position="35"/>
        <end position="55"/>
    </location>
</feature>
<feature type="transmembrane region" description="Helical; Name=3" evidence="2">
    <location>
        <begin position="60"/>
        <end position="82"/>
    </location>
</feature>
<feature type="domain" description="PQ-loop" evidence="1">
    <location>
        <begin position="7"/>
        <end position="59"/>
    </location>
</feature>
<feature type="mutagenesis site" description="Decreases sucrose transporter activity." evidence="2">
    <original>F</original>
    <variation>A</variation>
    <location>
        <position position="19"/>
    </location>
</feature>
<feature type="mutagenesis site" description="Strongly decreases sucrose transporter activity." evidence="2">
    <original>P</original>
    <variation>A</variation>
    <location>
        <position position="21"/>
    </location>
</feature>
<feature type="mutagenesis site" description="Slightly decreases sucrose transporter activity." evidence="2">
    <original>Q</original>
    <variation>A</variation>
    <location>
        <position position="22"/>
    </location>
</feature>
<feature type="mutagenesis site" description="No effect on sucrose transporter activity." evidence="2">
    <original>M</original>
    <variation>A</variation>
    <location>
        <position position="39"/>
    </location>
</feature>
<feature type="mutagenesis site" description="Decreases sucrose transporter activity." evidence="2">
    <original>Y</original>
    <variation>A</variation>
    <location>
        <position position="40"/>
    </location>
</feature>
<feature type="mutagenesis site" description="Increases sucrose transporter activity." evidence="2">
    <original>W</original>
    <variation>A</variation>
    <location>
        <position position="50"/>
    </location>
</feature>
<feature type="mutagenesis site" description="No effect on sucrose transporter activity." evidence="2">
    <original>W</original>
    <variation>F</variation>
    <location>
        <position position="50"/>
    </location>
</feature>
<feature type="mutagenesis site" description="Increases sucrose transporter activity." evidence="2">
    <original>Y</original>
    <variation>F</variation>
    <location>
        <position position="53"/>
    </location>
</feature>
<feature type="mutagenesis site" description="Increases sucrose transporter activity." evidence="2">
    <original>R</original>
    <variation>A</variation>
    <location>
        <position position="57"/>
    </location>
</feature>
<feature type="mutagenesis site" description="Impairs sucrose transporter activity." evidence="2">
    <original>N</original>
    <variation>A</variation>
    <location>
        <position position="66"/>
    </location>
</feature>
<feature type="helix" evidence="6">
    <location>
        <begin position="3"/>
        <end position="17"/>
    </location>
</feature>
<feature type="helix" evidence="6">
    <location>
        <begin position="20"/>
        <end position="29"/>
    </location>
</feature>
<feature type="helix" evidence="6">
    <location>
        <begin position="37"/>
        <end position="57"/>
    </location>
</feature>
<feature type="helix" evidence="6">
    <location>
        <begin position="60"/>
        <end position="86"/>
    </location>
</feature>
<gene>
    <name evidence="5" type="ORF">G925_04926</name>
</gene>
<reference key="1">
    <citation type="submission" date="2013-07" db="EMBL/GenBank/DDBJ databases">
        <title>The genome sequence of Escherichia coli UMEA 3162-1.</title>
        <authorList>
            <consortium name="The Broad Institute Genome Sequencing Platform"/>
            <consortium name="The Broad Institute Genome Sequencing Center for Infectious Disease"/>
            <person name="Feldgarden M."/>
            <person name="Frimodt-Moller N."/>
            <person name="Leihof R.F."/>
            <person name="Rasmussen L."/>
            <person name="Young S.K."/>
            <person name="Zeng Q."/>
            <person name="Gargeya S."/>
            <person name="Abouelleil A."/>
            <person name="Alvarado L."/>
            <person name="Berlin A.M."/>
            <person name="Chapman S.B."/>
            <person name="Gainer-Dewar J."/>
            <person name="Goldberg J."/>
            <person name="Gnerre S."/>
            <person name="Griggs A."/>
            <person name="Gujja S."/>
            <person name="Hansen M."/>
            <person name="Howarth C."/>
            <person name="Imamovic A."/>
            <person name="Larimer J."/>
            <person name="McCowan C."/>
            <person name="Murphy C."/>
            <person name="Pearson M."/>
            <person name="Poon T."/>
            <person name="Priest M."/>
            <person name="Roberts A."/>
            <person name="Saif S."/>
            <person name="Shea T."/>
            <person name="Sykes S."/>
            <person name="Wortman J."/>
            <person name="Nusbaum C."/>
            <person name="Birren B."/>
        </authorList>
    </citation>
    <scope>NUCLEOTIDE SEQUENCE [LARGE SCALE GENOMIC DNA]</scope>
    <source>
        <strain evidence="5">UMEA 3162-1</strain>
    </source>
</reference>
<reference key="2">
    <citation type="journal article" date="2015" name="Nat. Commun.">
        <title>Structural basis for the facilitative diffusion mechanism by SemiSWEET transporter.</title>
        <authorList>
            <person name="Lee Y."/>
            <person name="Nishizawa T."/>
            <person name="Yamashita K."/>
            <person name="Ishitani R."/>
            <person name="Nureki O."/>
        </authorList>
    </citation>
    <scope>X-RAY CRYSTALLOGRAPHY (2.0 ANGSTROMS)</scope>
    <scope>FUNCTION</scope>
    <scope>SUBCELLULAR LOCATION</scope>
    <scope>SUBUNIT</scope>
    <scope>MUTAGENESIS OF PHE-19; PRO-21; GLN-22; MET-39; TYR-40; TRP-50; TYR-53; ARG-57 AND ASN-66</scope>
</reference>
<protein>
    <recommendedName>
        <fullName evidence="3">Sugar transporter SemiSWEET</fullName>
    </recommendedName>
</protein>
<accession>P0DMV3</accession>
<dbReference type="EMBL" id="AWBU01000046">
    <property type="protein sequence ID" value="EQX17757.1"/>
    <property type="molecule type" value="Genomic_DNA"/>
</dbReference>
<dbReference type="RefSeq" id="WP_000379710.1">
    <property type="nucleotide sequence ID" value="NZ_KE701773.1"/>
</dbReference>
<dbReference type="PDB" id="4X5M">
    <property type="method" value="X-ray"/>
    <property type="resolution" value="2.00 A"/>
    <property type="chains" value="A/B/C=1-89"/>
</dbReference>
<dbReference type="PDB" id="4X5N">
    <property type="method" value="X-ray"/>
    <property type="resolution" value="3.00 A"/>
    <property type="chains" value="A/B/C/D=1-89"/>
</dbReference>
<dbReference type="PDBsum" id="4X5M"/>
<dbReference type="PDBsum" id="4X5N"/>
<dbReference type="SMR" id="P0DMV3"/>
<dbReference type="TCDB" id="2.A.123.2.16">
    <property type="family name" value="the sweet, pq-loop, saliva, mtn3 (sweet) family"/>
</dbReference>
<dbReference type="PATRIC" id="fig|1281200.3.peg.5089"/>
<dbReference type="HOGENOM" id="CLU_135915_2_0_6"/>
<dbReference type="EvolutionaryTrace" id="P0DMV3"/>
<dbReference type="Proteomes" id="UP000016035">
    <property type="component" value="Unassembled WGS sequence"/>
</dbReference>
<dbReference type="GO" id="GO:0005886">
    <property type="term" value="C:plasma membrane"/>
    <property type="evidence" value="ECO:0007669"/>
    <property type="project" value="UniProtKB-SubCell"/>
</dbReference>
<dbReference type="GO" id="GO:0051119">
    <property type="term" value="F:sugar transmembrane transporter activity"/>
    <property type="evidence" value="ECO:0007669"/>
    <property type="project" value="InterPro"/>
</dbReference>
<dbReference type="Gene3D" id="1.20.1280.290">
    <property type="match status" value="1"/>
</dbReference>
<dbReference type="InterPro" id="IPR006603">
    <property type="entry name" value="PQ-loop_rpt"/>
</dbReference>
<dbReference type="InterPro" id="IPR047662">
    <property type="entry name" value="SemiSWEET"/>
</dbReference>
<dbReference type="NCBIfam" id="NF037968">
    <property type="entry name" value="SemiSWEET_2"/>
    <property type="match status" value="1"/>
</dbReference>
<dbReference type="Pfam" id="PF04193">
    <property type="entry name" value="PQ-loop"/>
    <property type="match status" value="1"/>
</dbReference>